<feature type="chain" id="PRO_0000170282" description="Large ribosomal subunit protein bL33c">
    <location>
        <begin position="1"/>
        <end position="65"/>
    </location>
</feature>
<geneLocation type="chloroplast"/>
<gene>
    <name evidence="1" type="primary">rpl33</name>
    <name type="ordered locus">Grc000134</name>
</gene>
<sequence length="65" mass="7713">MSKSKGARIVITLECCCRNLNNITKKKSGIFRYTSTKNRKNTPNRIELMKFCPYCNKHQKFREIK</sequence>
<evidence type="ECO:0000255" key="1">
    <source>
        <dbReference type="HAMAP-Rule" id="MF_00294"/>
    </source>
</evidence>
<evidence type="ECO:0000305" key="2"/>
<keyword id="KW-0150">Chloroplast</keyword>
<keyword id="KW-0934">Plastid</keyword>
<keyword id="KW-0687">Ribonucleoprotein</keyword>
<keyword id="KW-0689">Ribosomal protein</keyword>
<proteinExistence type="inferred from homology"/>
<comment type="subcellular location">
    <subcellularLocation>
        <location>Plastid</location>
        <location>Chloroplast</location>
    </subcellularLocation>
</comment>
<comment type="similarity">
    <text evidence="1">Belongs to the bacterial ribosomal protein bL33 family.</text>
</comment>
<protein>
    <recommendedName>
        <fullName evidence="1">Large ribosomal subunit protein bL33c</fullName>
    </recommendedName>
    <alternativeName>
        <fullName evidence="2">50S ribosomal protein L33, chloroplastic</fullName>
    </alternativeName>
</protein>
<dbReference type="EMBL" id="AY673996">
    <property type="protein sequence ID" value="AAT79715.1"/>
    <property type="molecule type" value="Genomic_DNA"/>
</dbReference>
<dbReference type="RefSeq" id="YP_063640.1">
    <property type="nucleotide sequence ID" value="NC_006137.1"/>
</dbReference>
<dbReference type="GeneID" id="2943947"/>
<dbReference type="GO" id="GO:0009507">
    <property type="term" value="C:chloroplast"/>
    <property type="evidence" value="ECO:0007669"/>
    <property type="project" value="UniProtKB-SubCell"/>
</dbReference>
<dbReference type="GO" id="GO:1990904">
    <property type="term" value="C:ribonucleoprotein complex"/>
    <property type="evidence" value="ECO:0007669"/>
    <property type="project" value="UniProtKB-KW"/>
</dbReference>
<dbReference type="GO" id="GO:0005840">
    <property type="term" value="C:ribosome"/>
    <property type="evidence" value="ECO:0007669"/>
    <property type="project" value="UniProtKB-KW"/>
</dbReference>
<dbReference type="GO" id="GO:0003735">
    <property type="term" value="F:structural constituent of ribosome"/>
    <property type="evidence" value="ECO:0007669"/>
    <property type="project" value="InterPro"/>
</dbReference>
<dbReference type="GO" id="GO:0006412">
    <property type="term" value="P:translation"/>
    <property type="evidence" value="ECO:0007669"/>
    <property type="project" value="UniProtKB-UniRule"/>
</dbReference>
<dbReference type="Gene3D" id="2.20.28.120">
    <property type="entry name" value="Ribosomal protein L33"/>
    <property type="match status" value="1"/>
</dbReference>
<dbReference type="HAMAP" id="MF_00294">
    <property type="entry name" value="Ribosomal_bL33"/>
    <property type="match status" value="1"/>
</dbReference>
<dbReference type="InterPro" id="IPR001705">
    <property type="entry name" value="Ribosomal_bL33"/>
</dbReference>
<dbReference type="InterPro" id="IPR018264">
    <property type="entry name" value="Ribosomal_bL33_CS"/>
</dbReference>
<dbReference type="InterPro" id="IPR038584">
    <property type="entry name" value="Ribosomal_bL33_sf"/>
</dbReference>
<dbReference type="InterPro" id="IPR011332">
    <property type="entry name" value="Ribosomal_zn-bd"/>
</dbReference>
<dbReference type="NCBIfam" id="NF001764">
    <property type="entry name" value="PRK00504.1"/>
    <property type="match status" value="1"/>
</dbReference>
<dbReference type="NCBIfam" id="NF001860">
    <property type="entry name" value="PRK00595.1"/>
    <property type="match status" value="1"/>
</dbReference>
<dbReference type="NCBIfam" id="TIGR01023">
    <property type="entry name" value="rpmG_bact"/>
    <property type="match status" value="1"/>
</dbReference>
<dbReference type="PANTHER" id="PTHR43168">
    <property type="entry name" value="50S RIBOSOMAL PROTEIN L33, CHLOROPLASTIC"/>
    <property type="match status" value="1"/>
</dbReference>
<dbReference type="PANTHER" id="PTHR43168:SF2">
    <property type="entry name" value="LARGE RIBOSOMAL SUBUNIT PROTEIN BL33C"/>
    <property type="match status" value="1"/>
</dbReference>
<dbReference type="Pfam" id="PF00471">
    <property type="entry name" value="Ribosomal_L33"/>
    <property type="match status" value="1"/>
</dbReference>
<dbReference type="SUPFAM" id="SSF57829">
    <property type="entry name" value="Zn-binding ribosomal proteins"/>
    <property type="match status" value="1"/>
</dbReference>
<dbReference type="PROSITE" id="PS00582">
    <property type="entry name" value="RIBOSOMAL_L33"/>
    <property type="match status" value="1"/>
</dbReference>
<accession>Q6B8S0</accession>
<reference key="1">
    <citation type="journal article" date="2004" name="J. Mol. Evol.">
        <title>Comparative analysis of the complete plastid genome sequence of the red alga Gracilaria tenuistipitata var. liui provides insights into the evolution of rhodoplasts and their relationship to other plastids.</title>
        <authorList>
            <person name="Hagopian J.C."/>
            <person name="Reis M."/>
            <person name="Kitajima J.P."/>
            <person name="Bhattacharya D."/>
            <person name="de Oliveira M.C."/>
        </authorList>
    </citation>
    <scope>NUCLEOTIDE SEQUENCE [LARGE SCALE GENOMIC DNA]</scope>
</reference>
<organism>
    <name type="scientific">Gracilaria tenuistipitata var. liui</name>
    <name type="common">Red alga</name>
    <dbReference type="NCBI Taxonomy" id="285951"/>
    <lineage>
        <taxon>Eukaryota</taxon>
        <taxon>Rhodophyta</taxon>
        <taxon>Florideophyceae</taxon>
        <taxon>Rhodymeniophycidae</taxon>
        <taxon>Gracilariales</taxon>
        <taxon>Gracilariaceae</taxon>
        <taxon>Gracilaria</taxon>
        <taxon>Gracilaria tenuistipitata</taxon>
    </lineage>
</organism>
<name>RK33_GRATL</name>